<gene>
    <name type="primary">srd-30</name>
    <name type="ORF">F07C4.5</name>
</gene>
<keyword id="KW-0472">Membrane</keyword>
<keyword id="KW-1185">Reference proteome</keyword>
<keyword id="KW-0812">Transmembrane</keyword>
<keyword id="KW-1133">Transmembrane helix</keyword>
<feature type="chain" id="PRO_0000104517" description="Serpentine receptor class delta-30">
    <location>
        <begin position="1"/>
        <end position="324"/>
    </location>
</feature>
<feature type="transmembrane region" description="Helical" evidence="1">
    <location>
        <begin position="5"/>
        <end position="25"/>
    </location>
</feature>
<feature type="transmembrane region" description="Helical" evidence="1">
    <location>
        <begin position="38"/>
        <end position="58"/>
    </location>
</feature>
<feature type="transmembrane region" description="Helical" evidence="1">
    <location>
        <begin position="83"/>
        <end position="103"/>
    </location>
</feature>
<feature type="transmembrane region" description="Helical" evidence="1">
    <location>
        <begin position="124"/>
        <end position="144"/>
    </location>
</feature>
<feature type="transmembrane region" description="Helical" evidence="1">
    <location>
        <begin position="176"/>
        <end position="196"/>
    </location>
</feature>
<feature type="transmembrane region" description="Helical" evidence="1">
    <location>
        <begin position="227"/>
        <end position="247"/>
    </location>
</feature>
<feature type="transmembrane region" description="Helical" evidence="1">
    <location>
        <begin position="258"/>
        <end position="278"/>
    </location>
</feature>
<feature type="region of interest" description="Disordered" evidence="2">
    <location>
        <begin position="290"/>
        <end position="324"/>
    </location>
</feature>
<feature type="compositionally biased region" description="Polar residues" evidence="2">
    <location>
        <begin position="303"/>
        <end position="324"/>
    </location>
</feature>
<sequence>MIYQIIHSVLSTVGVSLNAFMMYLALTKSPKIMRPCSAIITIKTGTDILASIMSFFVMQRVITDGSSIIVIPTGPCTNFGKTACYVGHMLMLCFLEYNLIWMISSYIFRYYILYVRDPPIKHLVFVAFCLSIPSMVHMAAWFSFYDSNETTEDLSSYGIGSGEMALGGEVVYWSAITLITQLFITAFLVVVAYIWIRETLCSFAVKMGSVKKDVKNLNKRLVKVINFQVFLPSFIFLGVITFASMFTSKISYEYAQYAISVIFMFSPICSPFSYILFVPHYRNVIIGKKKQPKPHPEMCGPIRSNTRTTSISVTNNSSHLSSAH</sequence>
<reference key="1">
    <citation type="journal article" date="1998" name="Science">
        <title>Genome sequence of the nematode C. elegans: a platform for investigating biology.</title>
        <authorList>
            <consortium name="The C. elegans sequencing consortium"/>
        </authorList>
    </citation>
    <scope>NUCLEOTIDE SEQUENCE [LARGE SCALE GENOMIC DNA]</scope>
    <source>
        <strain>Bristol N2</strain>
    </source>
</reference>
<name>SRD30_CAEEL</name>
<comment type="subcellular location">
    <subcellularLocation>
        <location evidence="3">Membrane</location>
        <topology evidence="3">Multi-pass membrane protein</topology>
    </subcellularLocation>
</comment>
<comment type="similarity">
    <text evidence="3">Belongs to the nematode receptor-like protein srd family.</text>
</comment>
<accession>P91209</accession>
<evidence type="ECO:0000255" key="1"/>
<evidence type="ECO:0000256" key="2">
    <source>
        <dbReference type="SAM" id="MobiDB-lite"/>
    </source>
</evidence>
<evidence type="ECO:0000305" key="3"/>
<organism>
    <name type="scientific">Caenorhabditis elegans</name>
    <dbReference type="NCBI Taxonomy" id="6239"/>
    <lineage>
        <taxon>Eukaryota</taxon>
        <taxon>Metazoa</taxon>
        <taxon>Ecdysozoa</taxon>
        <taxon>Nematoda</taxon>
        <taxon>Chromadorea</taxon>
        <taxon>Rhabditida</taxon>
        <taxon>Rhabditina</taxon>
        <taxon>Rhabditomorpha</taxon>
        <taxon>Rhabditoidea</taxon>
        <taxon>Rhabditidae</taxon>
        <taxon>Peloderinae</taxon>
        <taxon>Caenorhabditis</taxon>
    </lineage>
</organism>
<protein>
    <recommendedName>
        <fullName>Serpentine receptor class delta-30</fullName>
        <shortName>Protein srd-30</shortName>
    </recommendedName>
</protein>
<proteinExistence type="inferred from homology"/>
<dbReference type="EMBL" id="FO080513">
    <property type="protein sequence ID" value="CCD64294.1"/>
    <property type="molecule type" value="Genomic_DNA"/>
</dbReference>
<dbReference type="PIR" id="T28940">
    <property type="entry name" value="T28940"/>
</dbReference>
<dbReference type="RefSeq" id="NP_504972.1">
    <property type="nucleotide sequence ID" value="NM_072571.1"/>
</dbReference>
<dbReference type="SMR" id="P91209"/>
<dbReference type="BioGRID" id="56306">
    <property type="interactions" value="1"/>
</dbReference>
<dbReference type="DIP" id="DIP-24923N"/>
<dbReference type="FunCoup" id="P91209">
    <property type="interactions" value="4"/>
</dbReference>
<dbReference type="IntAct" id="P91209">
    <property type="interactions" value="1"/>
</dbReference>
<dbReference type="PaxDb" id="6239-F07C4.5"/>
<dbReference type="EnsemblMetazoa" id="F07C4.5.1">
    <property type="protein sequence ID" value="F07C4.5.1"/>
    <property type="gene ID" value="WBGene00005108"/>
</dbReference>
<dbReference type="GeneID" id="191813"/>
<dbReference type="KEGG" id="cel:CELE_F07C4.5"/>
<dbReference type="UCSC" id="F07C4.5">
    <property type="organism name" value="c. elegans"/>
</dbReference>
<dbReference type="AGR" id="WB:WBGene00005108"/>
<dbReference type="CTD" id="191813"/>
<dbReference type="WormBase" id="F07C4.5">
    <property type="protein sequence ID" value="CE09204"/>
    <property type="gene ID" value="WBGene00005108"/>
    <property type="gene designation" value="srd-30"/>
</dbReference>
<dbReference type="eggNOG" id="ENOG502TJS3">
    <property type="taxonomic scope" value="Eukaryota"/>
</dbReference>
<dbReference type="GeneTree" id="ENSGT00970000195825"/>
<dbReference type="HOGENOM" id="CLU_057924_3_1_1"/>
<dbReference type="InParanoid" id="P91209"/>
<dbReference type="OMA" id="PHYRNFF"/>
<dbReference type="OrthoDB" id="5888683at2759"/>
<dbReference type="PhylomeDB" id="P91209"/>
<dbReference type="PRO" id="PR:P91209"/>
<dbReference type="Proteomes" id="UP000001940">
    <property type="component" value="Chromosome V"/>
</dbReference>
<dbReference type="Bgee" id="WBGene00005108">
    <property type="expression patterns" value="Expressed in larva"/>
</dbReference>
<dbReference type="GO" id="GO:0016020">
    <property type="term" value="C:membrane"/>
    <property type="evidence" value="ECO:0007669"/>
    <property type="project" value="UniProtKB-SubCell"/>
</dbReference>
<dbReference type="Gene3D" id="1.20.1070.10">
    <property type="entry name" value="Rhodopsin 7-helix transmembrane proteins"/>
    <property type="match status" value="1"/>
</dbReference>
<dbReference type="InterPro" id="IPR019421">
    <property type="entry name" value="7TM_GPCR_serpentine_rcpt_Srd"/>
</dbReference>
<dbReference type="InterPro" id="IPR050920">
    <property type="entry name" value="Nematode_rcpt-like_delta"/>
</dbReference>
<dbReference type="PANTHER" id="PTHR22945:SF9">
    <property type="entry name" value="SERPENTINE RECEPTOR, CLASS D (DELTA)-RELATED"/>
    <property type="match status" value="1"/>
</dbReference>
<dbReference type="PANTHER" id="PTHR22945">
    <property type="entry name" value="SERPENTINE RECEPTOR, CLASS D DELTA"/>
    <property type="match status" value="1"/>
</dbReference>
<dbReference type="Pfam" id="PF10317">
    <property type="entry name" value="7TM_GPCR_Srd"/>
    <property type="match status" value="1"/>
</dbReference>
<dbReference type="SUPFAM" id="SSF81321">
    <property type="entry name" value="Family A G protein-coupled receptor-like"/>
    <property type="match status" value="1"/>
</dbReference>